<sequence>MRLYRDNAVVLRQHKLGEADRIVTLLTRQHGLVRAVAKGVRRTKSKFGARLEPFAHIDVQLYPGRNLDIVTQVQTVDAFATDIVDDYSRYTTACAILETAERLAGEERAPAPQLHRLTVGALRAVAEHNRPCELILDAFLLRAMGFAGWAPALDDCARCSAPGPHRAFHVAAGGAVCVHCRPPGAATPSPGVLDLMDALIRGDWASTEDVPESLRGQASGLVAAHLQWHLERQLRTLPLIERARPHAAVRVEDSVRQDGDRDSTTRTSSPA</sequence>
<dbReference type="EMBL" id="CP000431">
    <property type="protein sequence ID" value="ABG93049.1"/>
    <property type="molecule type" value="Genomic_DNA"/>
</dbReference>
<dbReference type="RefSeq" id="WP_011594310.1">
    <property type="nucleotide sequence ID" value="NC_008268.1"/>
</dbReference>
<dbReference type="SMR" id="Q0SHD7"/>
<dbReference type="KEGG" id="rha:RHA1_ro01225"/>
<dbReference type="PATRIC" id="fig|101510.16.peg.1249"/>
<dbReference type="eggNOG" id="COG1381">
    <property type="taxonomic scope" value="Bacteria"/>
</dbReference>
<dbReference type="HOGENOM" id="CLU_066632_1_1_11"/>
<dbReference type="OrthoDB" id="9812244at2"/>
<dbReference type="Proteomes" id="UP000008710">
    <property type="component" value="Chromosome"/>
</dbReference>
<dbReference type="GO" id="GO:0043590">
    <property type="term" value="C:bacterial nucleoid"/>
    <property type="evidence" value="ECO:0007669"/>
    <property type="project" value="TreeGrafter"/>
</dbReference>
<dbReference type="GO" id="GO:0006310">
    <property type="term" value="P:DNA recombination"/>
    <property type="evidence" value="ECO:0007669"/>
    <property type="project" value="UniProtKB-UniRule"/>
</dbReference>
<dbReference type="GO" id="GO:0006302">
    <property type="term" value="P:double-strand break repair"/>
    <property type="evidence" value="ECO:0007669"/>
    <property type="project" value="TreeGrafter"/>
</dbReference>
<dbReference type="Gene3D" id="2.40.50.140">
    <property type="entry name" value="Nucleic acid-binding proteins"/>
    <property type="match status" value="1"/>
</dbReference>
<dbReference type="Gene3D" id="1.20.1440.120">
    <property type="entry name" value="Recombination protein O, C-terminal domain"/>
    <property type="match status" value="1"/>
</dbReference>
<dbReference type="HAMAP" id="MF_00201">
    <property type="entry name" value="RecO"/>
    <property type="match status" value="1"/>
</dbReference>
<dbReference type="InterPro" id="IPR037278">
    <property type="entry name" value="ARFGAP/RecO"/>
</dbReference>
<dbReference type="InterPro" id="IPR022572">
    <property type="entry name" value="DNA_rep/recomb_RecO_N"/>
</dbReference>
<dbReference type="InterPro" id="IPR012340">
    <property type="entry name" value="NA-bd_OB-fold"/>
</dbReference>
<dbReference type="InterPro" id="IPR003717">
    <property type="entry name" value="RecO"/>
</dbReference>
<dbReference type="InterPro" id="IPR042242">
    <property type="entry name" value="RecO_C"/>
</dbReference>
<dbReference type="NCBIfam" id="TIGR00613">
    <property type="entry name" value="reco"/>
    <property type="match status" value="1"/>
</dbReference>
<dbReference type="PANTHER" id="PTHR33991">
    <property type="entry name" value="DNA REPAIR PROTEIN RECO"/>
    <property type="match status" value="1"/>
</dbReference>
<dbReference type="PANTHER" id="PTHR33991:SF1">
    <property type="entry name" value="DNA REPAIR PROTEIN RECO"/>
    <property type="match status" value="1"/>
</dbReference>
<dbReference type="Pfam" id="PF02565">
    <property type="entry name" value="RecO_C"/>
    <property type="match status" value="1"/>
</dbReference>
<dbReference type="Pfam" id="PF11967">
    <property type="entry name" value="RecO_N"/>
    <property type="match status" value="1"/>
</dbReference>
<dbReference type="SUPFAM" id="SSF57863">
    <property type="entry name" value="ArfGap/RecO-like zinc finger"/>
    <property type="match status" value="1"/>
</dbReference>
<dbReference type="SUPFAM" id="SSF50249">
    <property type="entry name" value="Nucleic acid-binding proteins"/>
    <property type="match status" value="1"/>
</dbReference>
<gene>
    <name evidence="1" type="primary">recO</name>
    <name type="ordered locus">RHA1_ro01225</name>
</gene>
<evidence type="ECO:0000255" key="1">
    <source>
        <dbReference type="HAMAP-Rule" id="MF_00201"/>
    </source>
</evidence>
<evidence type="ECO:0000256" key="2">
    <source>
        <dbReference type="SAM" id="MobiDB-lite"/>
    </source>
</evidence>
<name>RECO_RHOJR</name>
<comment type="function">
    <text evidence="1">Involved in DNA repair and RecF pathway recombination.</text>
</comment>
<comment type="similarity">
    <text evidence="1">Belongs to the RecO family.</text>
</comment>
<accession>Q0SHD7</accession>
<organism>
    <name type="scientific">Rhodococcus jostii (strain RHA1)</name>
    <dbReference type="NCBI Taxonomy" id="101510"/>
    <lineage>
        <taxon>Bacteria</taxon>
        <taxon>Bacillati</taxon>
        <taxon>Actinomycetota</taxon>
        <taxon>Actinomycetes</taxon>
        <taxon>Mycobacteriales</taxon>
        <taxon>Nocardiaceae</taxon>
        <taxon>Rhodococcus</taxon>
    </lineage>
</organism>
<keyword id="KW-0227">DNA damage</keyword>
<keyword id="KW-0233">DNA recombination</keyword>
<keyword id="KW-0234">DNA repair</keyword>
<reference key="1">
    <citation type="journal article" date="2006" name="Proc. Natl. Acad. Sci. U.S.A.">
        <title>The complete genome of Rhodococcus sp. RHA1 provides insights into a catabolic powerhouse.</title>
        <authorList>
            <person name="McLeod M.P."/>
            <person name="Warren R.L."/>
            <person name="Hsiao W.W.L."/>
            <person name="Araki N."/>
            <person name="Myhre M."/>
            <person name="Fernandes C."/>
            <person name="Miyazawa D."/>
            <person name="Wong W."/>
            <person name="Lillquist A.L."/>
            <person name="Wang D."/>
            <person name="Dosanjh M."/>
            <person name="Hara H."/>
            <person name="Petrescu A."/>
            <person name="Morin R.D."/>
            <person name="Yang G."/>
            <person name="Stott J.M."/>
            <person name="Schein J.E."/>
            <person name="Shin H."/>
            <person name="Smailus D."/>
            <person name="Siddiqui A.S."/>
            <person name="Marra M.A."/>
            <person name="Jones S.J.M."/>
            <person name="Holt R."/>
            <person name="Brinkman F.S.L."/>
            <person name="Miyauchi K."/>
            <person name="Fukuda M."/>
            <person name="Davies J.E."/>
            <person name="Mohn W.W."/>
            <person name="Eltis L.D."/>
        </authorList>
    </citation>
    <scope>NUCLEOTIDE SEQUENCE [LARGE SCALE GENOMIC DNA]</scope>
    <source>
        <strain>RHA1</strain>
    </source>
</reference>
<proteinExistence type="inferred from homology"/>
<protein>
    <recommendedName>
        <fullName evidence="1">DNA repair protein RecO</fullName>
    </recommendedName>
    <alternativeName>
        <fullName evidence="1">Recombination protein O</fullName>
    </alternativeName>
</protein>
<feature type="chain" id="PRO_0000264835" description="DNA repair protein RecO">
    <location>
        <begin position="1"/>
        <end position="271"/>
    </location>
</feature>
<feature type="region of interest" description="Disordered" evidence="2">
    <location>
        <begin position="249"/>
        <end position="271"/>
    </location>
</feature>
<feature type="compositionally biased region" description="Basic and acidic residues" evidence="2">
    <location>
        <begin position="249"/>
        <end position="264"/>
    </location>
</feature>